<comment type="function">
    <text evidence="2">Catalyzes the two-step NADP-dependent conversion of GDP-4-dehydro-6-deoxy-D-mannose to GDP-fucose, involving an epimerase and a reductase reaction.</text>
</comment>
<comment type="catalytic activity">
    <reaction evidence="2">
        <text>GDP-beta-L-fucose + NADP(+) = GDP-4-dehydro-alpha-D-rhamnose + NADPH + H(+)</text>
        <dbReference type="Rhea" id="RHEA:18885"/>
        <dbReference type="ChEBI" id="CHEBI:15378"/>
        <dbReference type="ChEBI" id="CHEBI:57273"/>
        <dbReference type="ChEBI" id="CHEBI:57783"/>
        <dbReference type="ChEBI" id="CHEBI:57964"/>
        <dbReference type="ChEBI" id="CHEBI:58349"/>
        <dbReference type="EC" id="1.1.1.271"/>
    </reaction>
</comment>
<comment type="pathway">
    <text evidence="2">Nucleotide-sugar biosynthesis; GDP-L-fucose biosynthesis via de novo pathway; GDP-L-fucose from GDP-alpha-D-mannose: step 2/2.</text>
</comment>
<comment type="subunit">
    <text evidence="2">Homodimer.</text>
</comment>
<comment type="miscellaneous">
    <text>Mutagen treatment of P815 tumor cells produces tum-variants that elicit a cytolytic T-lymphocyte response (CTL). The antigenic allele differs from the normal allele by a single mutation in position 139.</text>
</comment>
<comment type="similarity">
    <text evidence="5">Belongs to the NAD(P)-dependent epimerase/dehydratase family. Fucose synthase subfamily.</text>
</comment>
<organism>
    <name type="scientific">Mus musculus</name>
    <name type="common">Mouse</name>
    <dbReference type="NCBI Taxonomy" id="10090"/>
    <lineage>
        <taxon>Eukaryota</taxon>
        <taxon>Metazoa</taxon>
        <taxon>Chordata</taxon>
        <taxon>Craniata</taxon>
        <taxon>Vertebrata</taxon>
        <taxon>Euteleostomi</taxon>
        <taxon>Mammalia</taxon>
        <taxon>Eutheria</taxon>
        <taxon>Euarchontoglires</taxon>
        <taxon>Glires</taxon>
        <taxon>Rodentia</taxon>
        <taxon>Myomorpha</taxon>
        <taxon>Muroidea</taxon>
        <taxon>Muridae</taxon>
        <taxon>Murinae</taxon>
        <taxon>Mus</taxon>
        <taxon>Mus</taxon>
    </lineage>
</organism>
<gene>
    <name evidence="6" type="primary">Gfus</name>
    <name evidence="4" type="synonym">P35b</name>
    <name evidence="6" type="synonym">Tsta3</name>
    <name evidence="6" type="synonym">Tstap35b</name>
</gene>
<reference key="1">
    <citation type="journal article" date="1990" name="EMBO J.">
        <title>Structure of the gene of tum- transplantation antigen P35B: presence of a point mutation in the antigenic allele.</title>
        <authorList>
            <person name="Szikora J.-P."/>
            <person name="van Pel A."/>
            <person name="Brichard V."/>
            <person name="Andre M."/>
            <person name="van Baren N."/>
            <person name="Henry P."/>
            <person name="de Plaen E."/>
            <person name="Boon T."/>
        </authorList>
    </citation>
    <scope>NUCLEOTIDE SEQUENCE [GENOMIC DNA / MRNA]</scope>
    <scope>VARIANT ASN-139</scope>
    <source>
        <strain>DBA/2J</strain>
        <tissue>Mast cell</tissue>
    </source>
</reference>
<reference key="2">
    <citation type="submission" date="2001-02" db="EMBL/GenBank/DDBJ databases">
        <authorList>
            <person name="de Plaen E."/>
        </authorList>
    </citation>
    <scope>SEQUENCE REVISION</scope>
</reference>
<reference key="3">
    <citation type="journal article" date="2005" name="Science">
        <title>The transcriptional landscape of the mammalian genome.</title>
        <authorList>
            <person name="Carninci P."/>
            <person name="Kasukawa T."/>
            <person name="Katayama S."/>
            <person name="Gough J."/>
            <person name="Frith M.C."/>
            <person name="Maeda N."/>
            <person name="Oyama R."/>
            <person name="Ravasi T."/>
            <person name="Lenhard B."/>
            <person name="Wells C."/>
            <person name="Kodzius R."/>
            <person name="Shimokawa K."/>
            <person name="Bajic V.B."/>
            <person name="Brenner S.E."/>
            <person name="Batalov S."/>
            <person name="Forrest A.R."/>
            <person name="Zavolan M."/>
            <person name="Davis M.J."/>
            <person name="Wilming L.G."/>
            <person name="Aidinis V."/>
            <person name="Allen J.E."/>
            <person name="Ambesi-Impiombato A."/>
            <person name="Apweiler R."/>
            <person name="Aturaliya R.N."/>
            <person name="Bailey T.L."/>
            <person name="Bansal M."/>
            <person name="Baxter L."/>
            <person name="Beisel K.W."/>
            <person name="Bersano T."/>
            <person name="Bono H."/>
            <person name="Chalk A.M."/>
            <person name="Chiu K.P."/>
            <person name="Choudhary V."/>
            <person name="Christoffels A."/>
            <person name="Clutterbuck D.R."/>
            <person name="Crowe M.L."/>
            <person name="Dalla E."/>
            <person name="Dalrymple B.P."/>
            <person name="de Bono B."/>
            <person name="Della Gatta G."/>
            <person name="di Bernardo D."/>
            <person name="Down T."/>
            <person name="Engstrom P."/>
            <person name="Fagiolini M."/>
            <person name="Faulkner G."/>
            <person name="Fletcher C.F."/>
            <person name="Fukushima T."/>
            <person name="Furuno M."/>
            <person name="Futaki S."/>
            <person name="Gariboldi M."/>
            <person name="Georgii-Hemming P."/>
            <person name="Gingeras T.R."/>
            <person name="Gojobori T."/>
            <person name="Green R.E."/>
            <person name="Gustincich S."/>
            <person name="Harbers M."/>
            <person name="Hayashi Y."/>
            <person name="Hensch T.K."/>
            <person name="Hirokawa N."/>
            <person name="Hill D."/>
            <person name="Huminiecki L."/>
            <person name="Iacono M."/>
            <person name="Ikeo K."/>
            <person name="Iwama A."/>
            <person name="Ishikawa T."/>
            <person name="Jakt M."/>
            <person name="Kanapin A."/>
            <person name="Katoh M."/>
            <person name="Kawasawa Y."/>
            <person name="Kelso J."/>
            <person name="Kitamura H."/>
            <person name="Kitano H."/>
            <person name="Kollias G."/>
            <person name="Krishnan S.P."/>
            <person name="Kruger A."/>
            <person name="Kummerfeld S.K."/>
            <person name="Kurochkin I.V."/>
            <person name="Lareau L.F."/>
            <person name="Lazarevic D."/>
            <person name="Lipovich L."/>
            <person name="Liu J."/>
            <person name="Liuni S."/>
            <person name="McWilliam S."/>
            <person name="Madan Babu M."/>
            <person name="Madera M."/>
            <person name="Marchionni L."/>
            <person name="Matsuda H."/>
            <person name="Matsuzawa S."/>
            <person name="Miki H."/>
            <person name="Mignone F."/>
            <person name="Miyake S."/>
            <person name="Morris K."/>
            <person name="Mottagui-Tabar S."/>
            <person name="Mulder N."/>
            <person name="Nakano N."/>
            <person name="Nakauchi H."/>
            <person name="Ng P."/>
            <person name="Nilsson R."/>
            <person name="Nishiguchi S."/>
            <person name="Nishikawa S."/>
            <person name="Nori F."/>
            <person name="Ohara O."/>
            <person name="Okazaki Y."/>
            <person name="Orlando V."/>
            <person name="Pang K.C."/>
            <person name="Pavan W.J."/>
            <person name="Pavesi G."/>
            <person name="Pesole G."/>
            <person name="Petrovsky N."/>
            <person name="Piazza S."/>
            <person name="Reed J."/>
            <person name="Reid J.F."/>
            <person name="Ring B.Z."/>
            <person name="Ringwald M."/>
            <person name="Rost B."/>
            <person name="Ruan Y."/>
            <person name="Salzberg S.L."/>
            <person name="Sandelin A."/>
            <person name="Schneider C."/>
            <person name="Schoenbach C."/>
            <person name="Sekiguchi K."/>
            <person name="Semple C.A."/>
            <person name="Seno S."/>
            <person name="Sessa L."/>
            <person name="Sheng Y."/>
            <person name="Shibata Y."/>
            <person name="Shimada H."/>
            <person name="Shimada K."/>
            <person name="Silva D."/>
            <person name="Sinclair B."/>
            <person name="Sperling S."/>
            <person name="Stupka E."/>
            <person name="Sugiura K."/>
            <person name="Sultana R."/>
            <person name="Takenaka Y."/>
            <person name="Taki K."/>
            <person name="Tammoja K."/>
            <person name="Tan S.L."/>
            <person name="Tang S."/>
            <person name="Taylor M.S."/>
            <person name="Tegner J."/>
            <person name="Teichmann S.A."/>
            <person name="Ueda H.R."/>
            <person name="van Nimwegen E."/>
            <person name="Verardo R."/>
            <person name="Wei C.L."/>
            <person name="Yagi K."/>
            <person name="Yamanishi H."/>
            <person name="Zabarovsky E."/>
            <person name="Zhu S."/>
            <person name="Zimmer A."/>
            <person name="Hide W."/>
            <person name="Bult C."/>
            <person name="Grimmond S.M."/>
            <person name="Teasdale R.D."/>
            <person name="Liu E.T."/>
            <person name="Brusic V."/>
            <person name="Quackenbush J."/>
            <person name="Wahlestedt C."/>
            <person name="Mattick J.S."/>
            <person name="Hume D.A."/>
            <person name="Kai C."/>
            <person name="Sasaki D."/>
            <person name="Tomaru Y."/>
            <person name="Fukuda S."/>
            <person name="Kanamori-Katayama M."/>
            <person name="Suzuki M."/>
            <person name="Aoki J."/>
            <person name="Arakawa T."/>
            <person name="Iida J."/>
            <person name="Imamura K."/>
            <person name="Itoh M."/>
            <person name="Kato T."/>
            <person name="Kawaji H."/>
            <person name="Kawagashira N."/>
            <person name="Kawashima T."/>
            <person name="Kojima M."/>
            <person name="Kondo S."/>
            <person name="Konno H."/>
            <person name="Nakano K."/>
            <person name="Ninomiya N."/>
            <person name="Nishio T."/>
            <person name="Okada M."/>
            <person name="Plessy C."/>
            <person name="Shibata K."/>
            <person name="Shiraki T."/>
            <person name="Suzuki S."/>
            <person name="Tagami M."/>
            <person name="Waki K."/>
            <person name="Watahiki A."/>
            <person name="Okamura-Oho Y."/>
            <person name="Suzuki H."/>
            <person name="Kawai J."/>
            <person name="Hayashizaki Y."/>
        </authorList>
    </citation>
    <scope>NUCLEOTIDE SEQUENCE [LARGE SCALE MRNA]</scope>
    <source>
        <strain>C57BL/6J</strain>
        <tissue>Testis</tissue>
    </source>
</reference>
<reference key="4">
    <citation type="journal article" date="2010" name="Cell">
        <title>A tissue-specific atlas of mouse protein phosphorylation and expression.</title>
        <authorList>
            <person name="Huttlin E.L."/>
            <person name="Jedrychowski M.P."/>
            <person name="Elias J.E."/>
            <person name="Goswami T."/>
            <person name="Rad R."/>
            <person name="Beausoleil S.A."/>
            <person name="Villen J."/>
            <person name="Haas W."/>
            <person name="Sowa M.E."/>
            <person name="Gygi S.P."/>
        </authorList>
    </citation>
    <scope>IDENTIFICATION BY MASS SPECTROMETRY [LARGE SCALE ANALYSIS]</scope>
    <source>
        <tissue>Brain</tissue>
        <tissue>Brown adipose tissue</tissue>
        <tissue>Heart</tissue>
        <tissue>Kidney</tissue>
        <tissue>Liver</tissue>
        <tissue>Lung</tissue>
        <tissue>Pancreas</tissue>
        <tissue>Spleen</tissue>
        <tissue>Testis</tissue>
    </source>
</reference>
<accession>P23591</accession>
<proteinExistence type="evidence at protein level"/>
<name>FCL_MOUSE</name>
<dbReference type="EC" id="1.1.1.271" evidence="2"/>
<dbReference type="EMBL" id="X53620">
    <property type="protein sequence ID" value="CAB94217.1"/>
    <property type="status" value="ALT_SEQ"/>
    <property type="molecule type" value="Genomic_DNA"/>
</dbReference>
<dbReference type="EMBL" id="X53621">
    <property type="protein sequence ID" value="CAB94217.1"/>
    <property type="status" value="JOINED"/>
    <property type="molecule type" value="Genomic_DNA"/>
</dbReference>
<dbReference type="EMBL" id="X53622">
    <property type="protein sequence ID" value="CAB94217.1"/>
    <property type="status" value="JOINED"/>
    <property type="molecule type" value="Genomic_DNA"/>
</dbReference>
<dbReference type="EMBL" id="X53623">
    <property type="protein sequence ID" value="CAB94217.1"/>
    <property type="status" value="JOINED"/>
    <property type="molecule type" value="Genomic_DNA"/>
</dbReference>
<dbReference type="EMBL" id="X53624">
    <property type="protein sequence ID" value="CAB94217.1"/>
    <property type="status" value="JOINED"/>
    <property type="molecule type" value="Genomic_DNA"/>
</dbReference>
<dbReference type="EMBL" id="X53625">
    <property type="protein sequence ID" value="CAB94217.1"/>
    <property type="status" value="JOINED"/>
    <property type="molecule type" value="Genomic_DNA"/>
</dbReference>
<dbReference type="EMBL" id="X53626">
    <property type="protein sequence ID" value="CAB94217.1"/>
    <property type="status" value="JOINED"/>
    <property type="molecule type" value="Genomic_DNA"/>
</dbReference>
<dbReference type="EMBL" id="X53627">
    <property type="protein sequence ID" value="CAB94217.1"/>
    <property type="status" value="JOINED"/>
    <property type="molecule type" value="Genomic_DNA"/>
</dbReference>
<dbReference type="EMBL" id="X53628">
    <property type="protein sequence ID" value="CAB94217.1"/>
    <property type="status" value="JOINED"/>
    <property type="molecule type" value="Genomic_DNA"/>
</dbReference>
<dbReference type="EMBL" id="M30127">
    <property type="protein sequence ID" value="AAA39673.2"/>
    <property type="molecule type" value="mRNA"/>
</dbReference>
<dbReference type="EMBL" id="M30128">
    <property type="protein sequence ID" value="AAA39674.1"/>
    <property type="status" value="ALT_FRAME"/>
    <property type="molecule type" value="Genomic_DNA"/>
</dbReference>
<dbReference type="EMBL" id="AK029632">
    <property type="protein sequence ID" value="BAC26539.1"/>
    <property type="molecule type" value="mRNA"/>
</dbReference>
<dbReference type="CCDS" id="CCDS27555.1"/>
<dbReference type="PIR" id="S12516">
    <property type="entry name" value="S12516"/>
</dbReference>
<dbReference type="RefSeq" id="NP_001343934.1">
    <property type="nucleotide sequence ID" value="NM_001357005.2"/>
</dbReference>
<dbReference type="RefSeq" id="NP_112478.1">
    <property type="nucleotide sequence ID" value="NM_031201.2"/>
</dbReference>
<dbReference type="RefSeq" id="XP_006520814.1">
    <property type="nucleotide sequence ID" value="XM_006520751.2"/>
</dbReference>
<dbReference type="SMR" id="P23591"/>
<dbReference type="BioGRID" id="204357">
    <property type="interactions" value="4"/>
</dbReference>
<dbReference type="FunCoup" id="P23591">
    <property type="interactions" value="1645"/>
</dbReference>
<dbReference type="STRING" id="10090.ENSMUSP00000155139"/>
<dbReference type="iPTMnet" id="P23591"/>
<dbReference type="PhosphoSitePlus" id="P23591"/>
<dbReference type="jPOST" id="P23591"/>
<dbReference type="PaxDb" id="10090-ENSMUSP00000023231"/>
<dbReference type="PeptideAtlas" id="P23591"/>
<dbReference type="ProteomicsDB" id="270975"/>
<dbReference type="Pumba" id="P23591"/>
<dbReference type="Antibodypedia" id="14656">
    <property type="antibodies" value="321 antibodies from 31 providers"/>
</dbReference>
<dbReference type="DNASU" id="22122"/>
<dbReference type="Ensembl" id="ENSMUST00000023231.7">
    <property type="protein sequence ID" value="ENSMUSP00000023231.6"/>
    <property type="gene ID" value="ENSMUSG00000022570.8"/>
</dbReference>
<dbReference type="Ensembl" id="ENSMUST00000229641.2">
    <property type="protein sequence ID" value="ENSMUSP00000155139.2"/>
    <property type="gene ID" value="ENSMUSG00000022570.8"/>
</dbReference>
<dbReference type="GeneID" id="22122"/>
<dbReference type="KEGG" id="mmu:22122"/>
<dbReference type="UCSC" id="uc007whs.1">
    <property type="organism name" value="mouse"/>
</dbReference>
<dbReference type="AGR" id="MGI:98857"/>
<dbReference type="CTD" id="7264"/>
<dbReference type="MGI" id="MGI:98857">
    <property type="gene designation" value="Gfus"/>
</dbReference>
<dbReference type="VEuPathDB" id="HostDB:ENSMUSG00000022570"/>
<dbReference type="eggNOG" id="KOG1431">
    <property type="taxonomic scope" value="Eukaryota"/>
</dbReference>
<dbReference type="GeneTree" id="ENSGT00390000004681"/>
<dbReference type="HOGENOM" id="CLU_007383_18_2_1"/>
<dbReference type="InParanoid" id="P23591"/>
<dbReference type="OMA" id="HPSNYGY"/>
<dbReference type="OrthoDB" id="202470at2759"/>
<dbReference type="PhylomeDB" id="P23591"/>
<dbReference type="TreeFam" id="TF314936"/>
<dbReference type="Reactome" id="R-MMU-6787639">
    <property type="pathway name" value="GDP-fucose biosynthesis"/>
</dbReference>
<dbReference type="UniPathway" id="UPA00128">
    <property type="reaction ID" value="UER00191"/>
</dbReference>
<dbReference type="BioGRID-ORCS" id="22122">
    <property type="hits" value="7 hits in 81 CRISPR screens"/>
</dbReference>
<dbReference type="PRO" id="PR:P23591"/>
<dbReference type="Proteomes" id="UP000000589">
    <property type="component" value="Chromosome 15"/>
</dbReference>
<dbReference type="RNAct" id="P23591">
    <property type="molecule type" value="protein"/>
</dbReference>
<dbReference type="Bgee" id="ENSMUSG00000022570">
    <property type="expression patterns" value="Expressed in paneth cell and 253 other cell types or tissues"/>
</dbReference>
<dbReference type="ExpressionAtlas" id="P23591">
    <property type="expression patterns" value="baseline and differential"/>
</dbReference>
<dbReference type="GO" id="GO:0005829">
    <property type="term" value="C:cytosol"/>
    <property type="evidence" value="ECO:0000314"/>
    <property type="project" value="MGI"/>
</dbReference>
<dbReference type="GO" id="GO:0050577">
    <property type="term" value="F:GDP-L-fucose synthase activity"/>
    <property type="evidence" value="ECO:0000314"/>
    <property type="project" value="MGI"/>
</dbReference>
<dbReference type="GO" id="GO:0047918">
    <property type="term" value="F:GDP-mannose 3,5-epimerase activity"/>
    <property type="evidence" value="ECO:0007669"/>
    <property type="project" value="Ensembl"/>
</dbReference>
<dbReference type="GO" id="GO:0042802">
    <property type="term" value="F:identical protein binding"/>
    <property type="evidence" value="ECO:0007669"/>
    <property type="project" value="Ensembl"/>
</dbReference>
<dbReference type="GO" id="GO:0016853">
    <property type="term" value="F:isomerase activity"/>
    <property type="evidence" value="ECO:0000314"/>
    <property type="project" value="MGI"/>
</dbReference>
<dbReference type="GO" id="GO:0042351">
    <property type="term" value="P:'de novo' GDP-L-fucose biosynthetic process"/>
    <property type="evidence" value="ECO:0000315"/>
    <property type="project" value="MGI"/>
</dbReference>
<dbReference type="GO" id="GO:0010595">
    <property type="term" value="P:positive regulation of endothelial cell migration"/>
    <property type="evidence" value="ECO:0000250"/>
    <property type="project" value="UniProtKB"/>
</dbReference>
<dbReference type="GO" id="GO:1904906">
    <property type="term" value="P:positive regulation of endothelial cell-matrix adhesion via fibronectin"/>
    <property type="evidence" value="ECO:0000250"/>
    <property type="project" value="UniProtKB"/>
</dbReference>
<dbReference type="GO" id="GO:0001913">
    <property type="term" value="P:T cell mediated cytotoxicity"/>
    <property type="evidence" value="ECO:0000315"/>
    <property type="project" value="MGI"/>
</dbReference>
<dbReference type="CDD" id="cd05239">
    <property type="entry name" value="GDP_FS_SDR_e"/>
    <property type="match status" value="1"/>
</dbReference>
<dbReference type="Gene3D" id="3.40.50.720">
    <property type="entry name" value="NAD(P)-binding Rossmann-like Domain"/>
    <property type="match status" value="1"/>
</dbReference>
<dbReference type="Gene3D" id="3.90.25.10">
    <property type="entry name" value="UDP-galactose 4-epimerase, domain 1"/>
    <property type="match status" value="1"/>
</dbReference>
<dbReference type="HAMAP" id="MF_00956">
    <property type="entry name" value="GDP_fucose_synth"/>
    <property type="match status" value="1"/>
</dbReference>
<dbReference type="InterPro" id="IPR001509">
    <property type="entry name" value="Epimerase_deHydtase"/>
</dbReference>
<dbReference type="InterPro" id="IPR028614">
    <property type="entry name" value="GDP_fucose/colitose_synth"/>
</dbReference>
<dbReference type="InterPro" id="IPR036291">
    <property type="entry name" value="NAD(P)-bd_dom_sf"/>
</dbReference>
<dbReference type="PANTHER" id="PTHR43238">
    <property type="entry name" value="GDP-L-FUCOSE SYNTHASE"/>
    <property type="match status" value="1"/>
</dbReference>
<dbReference type="PANTHER" id="PTHR43238:SF1">
    <property type="entry name" value="GDP-L-FUCOSE SYNTHASE"/>
    <property type="match status" value="1"/>
</dbReference>
<dbReference type="Pfam" id="PF01370">
    <property type="entry name" value="Epimerase"/>
    <property type="match status" value="1"/>
</dbReference>
<dbReference type="SUPFAM" id="SSF51735">
    <property type="entry name" value="NAD(P)-binding Rossmann-fold domains"/>
    <property type="match status" value="1"/>
</dbReference>
<evidence type="ECO:0000250" key="1"/>
<evidence type="ECO:0000250" key="2">
    <source>
        <dbReference type="UniProtKB" id="Q13630"/>
    </source>
</evidence>
<evidence type="ECO:0000269" key="3">
    <source>
    </source>
</evidence>
<evidence type="ECO:0000303" key="4">
    <source>
    </source>
</evidence>
<evidence type="ECO:0000305" key="5"/>
<evidence type="ECO:0000312" key="6">
    <source>
        <dbReference type="MGI" id="MGI:98857"/>
    </source>
</evidence>
<protein>
    <recommendedName>
        <fullName evidence="5">GDP-L-fucose synthase</fullName>
        <ecNumber evidence="2">1.1.1.271</ecNumber>
    </recommendedName>
    <alternativeName>
        <fullName>GDP-4-keto-6-deoxy-D-mannose-3,5-epimerase-4-reductase</fullName>
    </alternativeName>
    <alternativeName>
        <fullName>Protein FX</fullName>
    </alternativeName>
    <alternativeName>
        <fullName>Red cell NADP(H)-binding protein</fullName>
    </alternativeName>
    <alternativeName>
        <fullName>Transplantation antigen P35B</fullName>
    </alternativeName>
    <alternativeName>
        <fullName>Tum-P35B antigen</fullName>
    </alternativeName>
</protein>
<feature type="chain" id="PRO_0000174351" description="GDP-L-fucose synthase">
    <location>
        <begin position="1"/>
        <end position="321"/>
    </location>
</feature>
<feature type="active site" description="Proton donor/acceptor" evidence="1">
    <location>
        <position position="143"/>
    </location>
</feature>
<feature type="binding site" evidence="2">
    <location>
        <begin position="14"/>
        <end position="20"/>
    </location>
    <ligand>
        <name>NADP(+)</name>
        <dbReference type="ChEBI" id="CHEBI:58349"/>
    </ligand>
</feature>
<feature type="binding site" evidence="2">
    <location>
        <position position="147"/>
    </location>
    <ligand>
        <name>NADP(+)</name>
        <dbReference type="ChEBI" id="CHEBI:58349"/>
    </ligand>
</feature>
<feature type="binding site" evidence="2">
    <location>
        <begin position="170"/>
        <end position="173"/>
    </location>
    <ligand>
        <name>NADP(+)</name>
        <dbReference type="ChEBI" id="CHEBI:58349"/>
    </ligand>
</feature>
<feature type="binding site" evidence="2">
    <location>
        <position position="186"/>
    </location>
    <ligand>
        <name>NADP(+)</name>
        <dbReference type="ChEBI" id="CHEBI:58349"/>
    </ligand>
</feature>
<feature type="binding site" evidence="2">
    <location>
        <position position="194"/>
    </location>
    <ligand>
        <name>substrate</name>
    </ligand>
</feature>
<feature type="binding site" evidence="2">
    <location>
        <position position="208"/>
    </location>
    <ligand>
        <name>substrate</name>
    </ligand>
</feature>
<feature type="binding site" evidence="2">
    <location>
        <position position="215"/>
    </location>
    <ligand>
        <name>substrate</name>
    </ligand>
</feature>
<feature type="binding site" evidence="2">
    <location>
        <position position="277"/>
    </location>
    <ligand>
        <name>substrate</name>
    </ligand>
</feature>
<feature type="site" description="Important for catalytic activity" evidence="1">
    <location>
        <position position="114"/>
    </location>
</feature>
<feature type="site" description="Important for catalytic activity" evidence="1">
    <location>
        <position position="116"/>
    </location>
</feature>
<feature type="site" description="Lowers pKa of active site Tyr" evidence="1">
    <location>
        <position position="147"/>
    </location>
</feature>
<feature type="sequence variant" description="In allele TUM-." evidence="3">
    <original>S</original>
    <variation>N</variation>
    <location>
        <position position="139"/>
    </location>
</feature>
<sequence length="321" mass="35878">MGEPHGSMRILVTGGSGLVGRAIQKVVADGAGLPGEEWVFVSSKDADLTDAAQTQALFQKVQPTHVIHLAAMVGGLFRNIKYNLDFWRKNVHINDNVLHSAFEVGARKVVSCLSTCIFPDKTTYPIDETMIHNGPPHSSNFGYSYAKRMIDVQNRAYFQQHGCTFTAVIPTNVFGPYDNFNIEDGHVLPGLIHKVHLAKSSDSALTVWGTGKPRRQFIYSLDLARLFIWVLREYSEVEPIILSVGEEDEVSIKEAAEAVVEAMDFNGEVTFDSTKSDGQYKKTASNGKLRSYLPDFRFTPFKQAVKETCTWFTDNYEQARK</sequence>
<keyword id="KW-0413">Isomerase</keyword>
<keyword id="KW-0511">Multifunctional enzyme</keyword>
<keyword id="KW-0521">NADP</keyword>
<keyword id="KW-0560">Oxidoreductase</keyword>
<keyword id="KW-1185">Reference proteome</keyword>
<keyword id="KW-0825">Tumor antigen</keyword>